<dbReference type="EC" id="2.1.1.14" evidence="1"/>
<dbReference type="EMBL" id="CP000285">
    <property type="protein sequence ID" value="ABE58033.1"/>
    <property type="molecule type" value="Genomic_DNA"/>
</dbReference>
<dbReference type="RefSeq" id="WP_011505979.1">
    <property type="nucleotide sequence ID" value="NC_007963.1"/>
</dbReference>
<dbReference type="SMR" id="Q1QZS5"/>
<dbReference type="STRING" id="290398.Csal_0672"/>
<dbReference type="GeneID" id="95333432"/>
<dbReference type="KEGG" id="csa:Csal_0672"/>
<dbReference type="eggNOG" id="COG0620">
    <property type="taxonomic scope" value="Bacteria"/>
</dbReference>
<dbReference type="HOGENOM" id="CLU_013175_0_0_6"/>
<dbReference type="OrthoDB" id="244285at2"/>
<dbReference type="UniPathway" id="UPA00051">
    <property type="reaction ID" value="UER00082"/>
</dbReference>
<dbReference type="Proteomes" id="UP000000239">
    <property type="component" value="Chromosome"/>
</dbReference>
<dbReference type="GO" id="GO:0003871">
    <property type="term" value="F:5-methyltetrahydropteroyltriglutamate-homocysteine S-methyltransferase activity"/>
    <property type="evidence" value="ECO:0007669"/>
    <property type="project" value="UniProtKB-UniRule"/>
</dbReference>
<dbReference type="GO" id="GO:0008270">
    <property type="term" value="F:zinc ion binding"/>
    <property type="evidence" value="ECO:0007669"/>
    <property type="project" value="InterPro"/>
</dbReference>
<dbReference type="GO" id="GO:0009086">
    <property type="term" value="P:methionine biosynthetic process"/>
    <property type="evidence" value="ECO:0007669"/>
    <property type="project" value="UniProtKB-UniRule"/>
</dbReference>
<dbReference type="GO" id="GO:0032259">
    <property type="term" value="P:methylation"/>
    <property type="evidence" value="ECO:0007669"/>
    <property type="project" value="UniProtKB-KW"/>
</dbReference>
<dbReference type="CDD" id="cd03311">
    <property type="entry name" value="CIMS_C_terminal_like"/>
    <property type="match status" value="1"/>
</dbReference>
<dbReference type="CDD" id="cd03312">
    <property type="entry name" value="CIMS_N_terminal_like"/>
    <property type="match status" value="1"/>
</dbReference>
<dbReference type="FunFam" id="3.20.20.210:FF:000002">
    <property type="entry name" value="5-methyltetrahydropteroyltriglutamate--homocysteine methyltransferase"/>
    <property type="match status" value="1"/>
</dbReference>
<dbReference type="FunFam" id="3.20.20.210:FF:000003">
    <property type="entry name" value="5-methyltetrahydropteroyltriglutamate--homocysteine methyltransferase"/>
    <property type="match status" value="1"/>
</dbReference>
<dbReference type="Gene3D" id="3.20.20.210">
    <property type="match status" value="2"/>
</dbReference>
<dbReference type="HAMAP" id="MF_00172">
    <property type="entry name" value="Meth_synth"/>
    <property type="match status" value="1"/>
</dbReference>
<dbReference type="InterPro" id="IPR013215">
    <property type="entry name" value="Cbl-indep_Met_Synth_N"/>
</dbReference>
<dbReference type="InterPro" id="IPR006276">
    <property type="entry name" value="Cobalamin-indep_Met_synthase"/>
</dbReference>
<dbReference type="InterPro" id="IPR002629">
    <property type="entry name" value="Met_Synth_C/arc"/>
</dbReference>
<dbReference type="InterPro" id="IPR038071">
    <property type="entry name" value="UROD/MetE-like_sf"/>
</dbReference>
<dbReference type="NCBIfam" id="TIGR01371">
    <property type="entry name" value="met_syn_B12ind"/>
    <property type="match status" value="1"/>
</dbReference>
<dbReference type="NCBIfam" id="NF003556">
    <property type="entry name" value="PRK05222.1"/>
    <property type="match status" value="1"/>
</dbReference>
<dbReference type="PANTHER" id="PTHR30519">
    <property type="entry name" value="5-METHYLTETRAHYDROPTEROYLTRIGLUTAMATE--HOMOCYSTEINE METHYLTRANSFERASE"/>
    <property type="match status" value="1"/>
</dbReference>
<dbReference type="Pfam" id="PF08267">
    <property type="entry name" value="Meth_synt_1"/>
    <property type="match status" value="1"/>
</dbReference>
<dbReference type="Pfam" id="PF01717">
    <property type="entry name" value="Meth_synt_2"/>
    <property type="match status" value="1"/>
</dbReference>
<dbReference type="PIRSF" id="PIRSF000382">
    <property type="entry name" value="MeTrfase_B12_ind"/>
    <property type="match status" value="1"/>
</dbReference>
<dbReference type="SUPFAM" id="SSF51726">
    <property type="entry name" value="UROD/MetE-like"/>
    <property type="match status" value="2"/>
</dbReference>
<sequence length="761" mass="84663">MALAHILGYPRIGANRELKKAVEAYWKGDIDQAELERRGQALRAEHWQASRDAGLDFVTVGDFAFYDQVLNVSAMLGAVPPRFGAIDGDVDLDTTFRMARGRAPSGTPAAACEMTKYFDTNYHYLVPELHAGQRFRVASTRLFDEVAEAQAAGHPVKVALLGPVSWLWLGKEKSAGLDRLTLLDDVLSVYGEILERLAAQGVEWVQLDEPALVQDLPRDWRQAFESAYNKLQSAPVKLLLATYFGALGDNLGLAAGLPVAGLHIDTVRAPEQLDAVLDRLPTYKVLSLGAIDGRNIWRADLAALRERLQVARARLGERLWISASCSLLHVPVDLDAETDLDAELKSWLAFARQKLDEIVTLAHLLDGRATPEDTARLEAATSALDARRQSPRIHKPAVGERLAAVSADDAERASPYATRAKAQHRHLDLPLFPTTTIGSFPQTQDIRAARRAFKSGELSRDDYEARMRDEIAHAVERQEALAIDVPVHGEPERNDMVEYFGELLDGFAFTRFGWVQSYGSRCVKPPVIFGDVSRPGPMTVRWSEYAQSLTDKPMKGMLTGPVTILQWSFVRDDQPRDATCRQIALSLRDEVADLEAAGIKIIQIDEPALREGLPLRQGEWQEYLDWAVKSFKLSAAVARDETQIHTHMCYSEFNDIIAAIAALDADVITIETSRSDMELLDAFQDFAYPNEIGPGVYDIHSPNIPEVEWMVSLMEKAAEKIPAERLWVNPDCGLKTRGWAEVEPALANMVEAARELRRRYG</sequence>
<feature type="chain" id="PRO_1000017237" description="5-methyltetrahydropteroyltriglutamate--homocysteine methyltransferase">
    <location>
        <begin position="1"/>
        <end position="761"/>
    </location>
</feature>
<feature type="active site" description="Proton donor" evidence="1">
    <location>
        <position position="700"/>
    </location>
</feature>
<feature type="binding site" evidence="1">
    <location>
        <begin position="16"/>
        <end position="19"/>
    </location>
    <ligand>
        <name>5-methyltetrahydropteroyltri-L-glutamate</name>
        <dbReference type="ChEBI" id="CHEBI:58207"/>
    </ligand>
</feature>
<feature type="binding site" evidence="1">
    <location>
        <position position="116"/>
    </location>
    <ligand>
        <name>5-methyltetrahydropteroyltri-L-glutamate</name>
        <dbReference type="ChEBI" id="CHEBI:58207"/>
    </ligand>
</feature>
<feature type="binding site" evidence="1">
    <location>
        <begin position="437"/>
        <end position="439"/>
    </location>
    <ligand>
        <name>L-homocysteine</name>
        <dbReference type="ChEBI" id="CHEBI:58199"/>
    </ligand>
</feature>
<feature type="binding site" evidence="1">
    <location>
        <begin position="437"/>
        <end position="439"/>
    </location>
    <ligand>
        <name>L-methionine</name>
        <dbReference type="ChEBI" id="CHEBI:57844"/>
    </ligand>
</feature>
<feature type="binding site" evidence="1">
    <location>
        <position position="490"/>
    </location>
    <ligand>
        <name>L-homocysteine</name>
        <dbReference type="ChEBI" id="CHEBI:58199"/>
    </ligand>
</feature>
<feature type="binding site" evidence="1">
    <location>
        <position position="490"/>
    </location>
    <ligand>
        <name>L-methionine</name>
        <dbReference type="ChEBI" id="CHEBI:57844"/>
    </ligand>
</feature>
<feature type="binding site" evidence="1">
    <location>
        <begin position="521"/>
        <end position="522"/>
    </location>
    <ligand>
        <name>5-methyltetrahydropteroyltri-L-glutamate</name>
        <dbReference type="ChEBI" id="CHEBI:58207"/>
    </ligand>
</feature>
<feature type="binding site" evidence="1">
    <location>
        <position position="567"/>
    </location>
    <ligand>
        <name>5-methyltetrahydropteroyltri-L-glutamate</name>
        <dbReference type="ChEBI" id="CHEBI:58207"/>
    </ligand>
</feature>
<feature type="binding site" evidence="1">
    <location>
        <position position="605"/>
    </location>
    <ligand>
        <name>L-homocysteine</name>
        <dbReference type="ChEBI" id="CHEBI:58199"/>
    </ligand>
</feature>
<feature type="binding site" evidence="1">
    <location>
        <position position="605"/>
    </location>
    <ligand>
        <name>L-methionine</name>
        <dbReference type="ChEBI" id="CHEBI:57844"/>
    </ligand>
</feature>
<feature type="binding site" evidence="1">
    <location>
        <position position="611"/>
    </location>
    <ligand>
        <name>5-methyltetrahydropteroyltri-L-glutamate</name>
        <dbReference type="ChEBI" id="CHEBI:58207"/>
    </ligand>
</feature>
<feature type="binding site" evidence="1">
    <location>
        <position position="647"/>
    </location>
    <ligand>
        <name>Zn(2+)</name>
        <dbReference type="ChEBI" id="CHEBI:29105"/>
        <note>catalytic</note>
    </ligand>
</feature>
<feature type="binding site" evidence="1">
    <location>
        <position position="649"/>
    </location>
    <ligand>
        <name>Zn(2+)</name>
        <dbReference type="ChEBI" id="CHEBI:29105"/>
        <note>catalytic</note>
    </ligand>
</feature>
<feature type="binding site" evidence="1">
    <location>
        <position position="671"/>
    </location>
    <ligand>
        <name>Zn(2+)</name>
        <dbReference type="ChEBI" id="CHEBI:29105"/>
        <note>catalytic</note>
    </ligand>
</feature>
<feature type="binding site" evidence="1">
    <location>
        <position position="732"/>
    </location>
    <ligand>
        <name>Zn(2+)</name>
        <dbReference type="ChEBI" id="CHEBI:29105"/>
        <note>catalytic</note>
    </ligand>
</feature>
<accession>Q1QZS5</accession>
<keyword id="KW-0028">Amino-acid biosynthesis</keyword>
<keyword id="KW-0479">Metal-binding</keyword>
<keyword id="KW-0486">Methionine biosynthesis</keyword>
<keyword id="KW-0489">Methyltransferase</keyword>
<keyword id="KW-1185">Reference proteome</keyword>
<keyword id="KW-0677">Repeat</keyword>
<keyword id="KW-0808">Transferase</keyword>
<keyword id="KW-0862">Zinc</keyword>
<gene>
    <name evidence="1" type="primary">metE</name>
    <name type="ordered locus">Csal_0672</name>
</gene>
<protein>
    <recommendedName>
        <fullName evidence="1">5-methyltetrahydropteroyltriglutamate--homocysteine methyltransferase</fullName>
        <ecNumber evidence="1">2.1.1.14</ecNumber>
    </recommendedName>
    <alternativeName>
        <fullName evidence="1">Cobalamin-independent methionine synthase</fullName>
    </alternativeName>
    <alternativeName>
        <fullName evidence="1">Methionine synthase, vitamin-B12 independent isozyme</fullName>
    </alternativeName>
</protein>
<organism>
    <name type="scientific">Chromohalobacter salexigens (strain ATCC BAA-138 / DSM 3043 / CIP 106854 / NCIMB 13768 / 1H11)</name>
    <dbReference type="NCBI Taxonomy" id="290398"/>
    <lineage>
        <taxon>Bacteria</taxon>
        <taxon>Pseudomonadati</taxon>
        <taxon>Pseudomonadota</taxon>
        <taxon>Gammaproteobacteria</taxon>
        <taxon>Oceanospirillales</taxon>
        <taxon>Halomonadaceae</taxon>
        <taxon>Chromohalobacter</taxon>
    </lineage>
</organism>
<proteinExistence type="inferred from homology"/>
<name>METE_CHRSD</name>
<reference key="1">
    <citation type="journal article" date="2011" name="Stand. Genomic Sci.">
        <title>Complete genome sequence of the halophilic and highly halotolerant Chromohalobacter salexigens type strain (1H11(T)).</title>
        <authorList>
            <person name="Copeland A."/>
            <person name="O'Connor K."/>
            <person name="Lucas S."/>
            <person name="Lapidus A."/>
            <person name="Berry K.W."/>
            <person name="Detter J.C."/>
            <person name="Del Rio T.G."/>
            <person name="Hammon N."/>
            <person name="Dalin E."/>
            <person name="Tice H."/>
            <person name="Pitluck S."/>
            <person name="Bruce D."/>
            <person name="Goodwin L."/>
            <person name="Han C."/>
            <person name="Tapia R."/>
            <person name="Saunders E."/>
            <person name="Schmutz J."/>
            <person name="Brettin T."/>
            <person name="Larimer F."/>
            <person name="Land M."/>
            <person name="Hauser L."/>
            <person name="Vargas C."/>
            <person name="Nieto J.J."/>
            <person name="Kyrpides N.C."/>
            <person name="Ivanova N."/>
            <person name="Goker M."/>
            <person name="Klenk H.P."/>
            <person name="Csonka L.N."/>
            <person name="Woyke T."/>
        </authorList>
    </citation>
    <scope>NUCLEOTIDE SEQUENCE [LARGE SCALE GENOMIC DNA]</scope>
    <source>
        <strain>ATCC BAA-138 / DSM 3043 / CIP 106854 / NCIMB 13768 / 1H11</strain>
    </source>
</reference>
<evidence type="ECO:0000255" key="1">
    <source>
        <dbReference type="HAMAP-Rule" id="MF_00172"/>
    </source>
</evidence>
<comment type="function">
    <text evidence="1">Catalyzes the transfer of a methyl group from 5-methyltetrahydrofolate to homocysteine resulting in methionine formation.</text>
</comment>
<comment type="catalytic activity">
    <reaction evidence="1">
        <text>5-methyltetrahydropteroyltri-L-glutamate + L-homocysteine = tetrahydropteroyltri-L-glutamate + L-methionine</text>
        <dbReference type="Rhea" id="RHEA:21196"/>
        <dbReference type="ChEBI" id="CHEBI:57844"/>
        <dbReference type="ChEBI" id="CHEBI:58140"/>
        <dbReference type="ChEBI" id="CHEBI:58199"/>
        <dbReference type="ChEBI" id="CHEBI:58207"/>
        <dbReference type="EC" id="2.1.1.14"/>
    </reaction>
</comment>
<comment type="cofactor">
    <cofactor evidence="1">
        <name>Zn(2+)</name>
        <dbReference type="ChEBI" id="CHEBI:29105"/>
    </cofactor>
    <text evidence="1">Binds 1 zinc ion per subunit.</text>
</comment>
<comment type="pathway">
    <text evidence="1">Amino-acid biosynthesis; L-methionine biosynthesis via de novo pathway; L-methionine from L-homocysteine (MetE route): step 1/1.</text>
</comment>
<comment type="similarity">
    <text evidence="1">Belongs to the vitamin-B12 independent methionine synthase family.</text>
</comment>